<evidence type="ECO:0000250" key="1">
    <source>
        <dbReference type="UniProtKB" id="O05461"/>
    </source>
</evidence>
<evidence type="ECO:0000255" key="2"/>
<evidence type="ECO:0000255" key="3">
    <source>
        <dbReference type="PROSITE-ProRule" id="PRU01240"/>
    </source>
</evidence>
<evidence type="ECO:0000256" key="4">
    <source>
        <dbReference type="SAM" id="MobiDB-lite"/>
    </source>
</evidence>
<evidence type="ECO:0000269" key="5">
    <source>
    </source>
</evidence>
<evidence type="ECO:0000303" key="6">
    <source>
    </source>
</evidence>
<evidence type="ECO:0000305" key="7"/>
<evidence type="ECO:0000312" key="8">
    <source>
        <dbReference type="EMBL" id="CCP44562.1"/>
    </source>
</evidence>
<organism>
    <name type="scientific">Mycobacterium tuberculosis (strain ATCC 25618 / H37Rv)</name>
    <dbReference type="NCBI Taxonomy" id="83332"/>
    <lineage>
        <taxon>Bacteria</taxon>
        <taxon>Bacillati</taxon>
        <taxon>Actinomycetota</taxon>
        <taxon>Actinomycetes</taxon>
        <taxon>Mycobacteriales</taxon>
        <taxon>Mycobacteriaceae</taxon>
        <taxon>Mycobacterium</taxon>
        <taxon>Mycobacterium tuberculosis complex</taxon>
    </lineage>
</organism>
<reference key="1">
    <citation type="journal article" date="1998" name="Nature">
        <title>Deciphering the biology of Mycobacterium tuberculosis from the complete genome sequence.</title>
        <authorList>
            <person name="Cole S.T."/>
            <person name="Brosch R."/>
            <person name="Parkhill J."/>
            <person name="Garnier T."/>
            <person name="Churcher C.M."/>
            <person name="Harris D.E."/>
            <person name="Gordon S.V."/>
            <person name="Eiglmeier K."/>
            <person name="Gas S."/>
            <person name="Barry C.E. III"/>
            <person name="Tekaia F."/>
            <person name="Badcock K."/>
            <person name="Basham D."/>
            <person name="Brown D."/>
            <person name="Chillingworth T."/>
            <person name="Connor R."/>
            <person name="Davies R.M."/>
            <person name="Devlin K."/>
            <person name="Feltwell T."/>
            <person name="Gentles S."/>
            <person name="Hamlin N."/>
            <person name="Holroyd S."/>
            <person name="Hornsby T."/>
            <person name="Jagels K."/>
            <person name="Krogh A."/>
            <person name="McLean J."/>
            <person name="Moule S."/>
            <person name="Murphy L.D."/>
            <person name="Oliver S."/>
            <person name="Osborne J."/>
            <person name="Quail M.A."/>
            <person name="Rajandream M.A."/>
            <person name="Rogers J."/>
            <person name="Rutter S."/>
            <person name="Seeger K."/>
            <person name="Skelton S."/>
            <person name="Squares S."/>
            <person name="Squares R."/>
            <person name="Sulston J.E."/>
            <person name="Taylor K."/>
            <person name="Whitehead S."/>
            <person name="Barrell B.G."/>
        </authorList>
    </citation>
    <scope>NUCLEOTIDE SEQUENCE [LARGE SCALE GENOMIC DNA]</scope>
    <source>
        <strain>ATCC 25618 / H37Rv</strain>
    </source>
</reference>
<reference key="2">
    <citation type="journal article" date="2000" name="Gene">
        <title>The mycosins of Mycobacterium tuberculosis H37Rv: a family of subtilisin-like serine proteases.</title>
        <authorList>
            <person name="Brown G.D."/>
            <person name="Dave J.A."/>
            <person name="Gey van Pittius N.C."/>
            <person name="Stevens L."/>
            <person name="Ehlers M.R."/>
            <person name="Beyers A.D."/>
        </authorList>
    </citation>
    <scope>INDUCTION</scope>
    <source>
        <strain>H37Rv</strain>
    </source>
</reference>
<reference key="3">
    <citation type="journal article" date="2011" name="Mol. Cell. Proteomics">
        <title>Proteogenomic analysis of Mycobacterium tuberculosis by high resolution mass spectrometry.</title>
        <authorList>
            <person name="Kelkar D.S."/>
            <person name="Kumar D."/>
            <person name="Kumar P."/>
            <person name="Balakrishnan L."/>
            <person name="Muthusamy B."/>
            <person name="Yadav A.K."/>
            <person name="Shrivastava P."/>
            <person name="Marimuthu A."/>
            <person name="Anand S."/>
            <person name="Sundaram H."/>
            <person name="Kingsbury R."/>
            <person name="Harsha H.C."/>
            <person name="Nair B."/>
            <person name="Prasad T.S."/>
            <person name="Chauhan D.S."/>
            <person name="Katoch K."/>
            <person name="Katoch V.M."/>
            <person name="Kumar P."/>
            <person name="Chaerkady R."/>
            <person name="Ramachandran S."/>
            <person name="Dash D."/>
            <person name="Pandey A."/>
        </authorList>
    </citation>
    <scope>IDENTIFICATION BY MASS SPECTROMETRY [LARGE SCALE ANALYSIS]</scope>
    <source>
        <strain>ATCC 25618 / H37Rv</strain>
    </source>
</reference>
<feature type="signal peptide" evidence="2">
    <location>
        <begin position="1"/>
        <end position="39"/>
    </location>
</feature>
<feature type="chain" id="PRO_5007696963" description="Mycosin-5">
    <location>
        <begin position="40"/>
        <end position="585"/>
    </location>
</feature>
<feature type="transmembrane region" description="Helical" evidence="2">
    <location>
        <begin position="552"/>
        <end position="572"/>
    </location>
</feature>
<feature type="domain" description="Peptidase S8" evidence="3">
    <location>
        <begin position="83"/>
        <end position="521"/>
    </location>
</feature>
<feature type="region of interest" description="Disordered" evidence="4">
    <location>
        <begin position="163"/>
        <end position="269"/>
    </location>
</feature>
<feature type="compositionally biased region" description="Low complexity" evidence="4">
    <location>
        <begin position="163"/>
        <end position="173"/>
    </location>
</feature>
<feature type="compositionally biased region" description="Pro residues" evidence="4">
    <location>
        <begin position="196"/>
        <end position="224"/>
    </location>
</feature>
<feature type="compositionally biased region" description="Pro residues" evidence="4">
    <location>
        <begin position="252"/>
        <end position="267"/>
    </location>
</feature>
<feature type="active site" description="Charge relay system" evidence="3">
    <location>
        <position position="109"/>
    </location>
</feature>
<feature type="active site" description="Charge relay system" evidence="3">
    <location>
        <position position="141"/>
    </location>
</feature>
<feature type="active site" description="Charge relay system" evidence="3">
    <location>
        <position position="466"/>
    </location>
</feature>
<sequence>MQRFGTGSSRSWCGRAGTATIAAVLLASGALTGLPPAYAISPPTIDPGALPPDGPPGPLAPMKQNAYCTEVGVLPGTDFQLQPKYMEMLNLNEAWQFGRGDGVKVAVIDTGVTPHPRLPRLIPGGDYVMAGGDGLSDCDAHGTLVASMIAAVPANGAVPLPSVPRRPVTIPTTETPPPPQTVTLSPVPPQTVTVIPAPPPEEGVPPGAPVPGPEPPPAPGPQPPAVDRGGGTVTVPSYSGGRKIAPIDNPRNPHPSAPSPALGPPPDAFSGIAPGVEIISIRQSSQAFGLKDPYTGDEDPQTAQKIDNVETMARAIVHAANMGASVINISDVMCMSARNVIDQRALGAAVHYAAVDKDAVIVAAAGDGSKKDCKQNPIFDPLQPDDPRAWNAVTTVVTPSWFHDYVLTVGAVDANGQPLSKMSIAGPWVSISAPGTDVVGLSPRDDGLINAIDGPDNSLLVPAGTSFSAAIVSGVAALVRAKFPELSAYQIINRLIHTARPPARGVDNQVGYGVVDPVAALTWDVPKGPAEPPKQLSAPLVVPQPPAPRDMVPIWVAAGGLAGALLIGGAVFGTATLMRRSRKQQ</sequence>
<keyword id="KW-0002">3D-structure</keyword>
<keyword id="KW-1003">Cell membrane</keyword>
<keyword id="KW-0378">Hydrolase</keyword>
<keyword id="KW-0472">Membrane</keyword>
<keyword id="KW-0645">Protease</keyword>
<keyword id="KW-1185">Reference proteome</keyword>
<keyword id="KW-0720">Serine protease</keyword>
<keyword id="KW-0732">Signal</keyword>
<keyword id="KW-0812">Transmembrane</keyword>
<keyword id="KW-1133">Transmembrane helix</keyword>
<proteinExistence type="evidence at protein level"/>
<protein>
    <recommendedName>
        <fullName evidence="6">Mycosin-5</fullName>
        <ecNumber evidence="1">3.4.21.-</ecNumber>
    </recommendedName>
    <alternativeName>
        <fullName evidence="7">MycP5 protease</fullName>
    </alternativeName>
</protein>
<accession>O53945</accession>
<accession>F2GIW7</accession>
<accession>I6YBM3</accession>
<accession>Q7D7Y3</accession>
<dbReference type="EC" id="3.4.21.-" evidence="1"/>
<dbReference type="EMBL" id="AL123456">
    <property type="protein sequence ID" value="CCP44562.1"/>
    <property type="molecule type" value="Genomic_DNA"/>
</dbReference>
<dbReference type="RefSeq" id="NP_216312.1">
    <property type="nucleotide sequence ID" value="NC_000962.3"/>
</dbReference>
<dbReference type="RefSeq" id="WP_003408854.1">
    <property type="nucleotide sequence ID" value="NZ_NVQJ01000037.1"/>
</dbReference>
<dbReference type="PDB" id="7NP7">
    <property type="method" value="EM"/>
    <property type="resolution" value="4.03 A"/>
    <property type="chains" value="P1/P2/P3=1-585"/>
</dbReference>
<dbReference type="PDB" id="7NPR">
    <property type="method" value="EM"/>
    <property type="resolution" value="3.82 A"/>
    <property type="chains" value="P1/P2/P3=1-585"/>
</dbReference>
<dbReference type="PDB" id="7NPS">
    <property type="method" value="EM"/>
    <property type="resolution" value="3.81 A"/>
    <property type="chains" value="P1/P2/P3=1-585"/>
</dbReference>
<dbReference type="PDBsum" id="7NP7"/>
<dbReference type="PDBsum" id="7NPR"/>
<dbReference type="PDBsum" id="7NPS"/>
<dbReference type="EMDB" id="EMD-12514"/>
<dbReference type="EMDB" id="EMD-12517"/>
<dbReference type="EMDB" id="EMD-12518"/>
<dbReference type="EMDB" id="EMD-12519"/>
<dbReference type="SMR" id="O53945"/>
<dbReference type="FunCoup" id="O53945">
    <property type="interactions" value="34"/>
</dbReference>
<dbReference type="STRING" id="83332.Rv1796"/>
<dbReference type="TCDB" id="3.A.24.4.1">
    <property type="family name" value="the type vii or esx protein secretion system (t7ss) family"/>
</dbReference>
<dbReference type="PaxDb" id="83332-Rv1796"/>
<dbReference type="GeneID" id="885879"/>
<dbReference type="KEGG" id="mtu:Rv1796"/>
<dbReference type="KEGG" id="mtv:RVBD_1796"/>
<dbReference type="PATRIC" id="fig|83332.111.peg.2001"/>
<dbReference type="TubercuList" id="Rv1796"/>
<dbReference type="eggNOG" id="COG1404">
    <property type="taxonomic scope" value="Bacteria"/>
</dbReference>
<dbReference type="HOGENOM" id="CLU_011263_13_1_11"/>
<dbReference type="InParanoid" id="O53945"/>
<dbReference type="OrthoDB" id="9798386at2"/>
<dbReference type="PhylomeDB" id="O53945"/>
<dbReference type="Proteomes" id="UP000001584">
    <property type="component" value="Chromosome"/>
</dbReference>
<dbReference type="GO" id="GO:0005886">
    <property type="term" value="C:plasma membrane"/>
    <property type="evidence" value="ECO:0000318"/>
    <property type="project" value="GO_Central"/>
</dbReference>
<dbReference type="GO" id="GO:0004252">
    <property type="term" value="F:serine-type endopeptidase activity"/>
    <property type="evidence" value="ECO:0000318"/>
    <property type="project" value="GO_Central"/>
</dbReference>
<dbReference type="GO" id="GO:0016485">
    <property type="term" value="P:protein processing"/>
    <property type="evidence" value="ECO:0000318"/>
    <property type="project" value="GO_Central"/>
</dbReference>
<dbReference type="CDD" id="cd00306">
    <property type="entry name" value="Peptidases_S8_S53"/>
    <property type="match status" value="1"/>
</dbReference>
<dbReference type="FunFam" id="3.40.50.200:FF:000034">
    <property type="entry name" value="Proline rich membrane-anchored mycosin"/>
    <property type="match status" value="1"/>
</dbReference>
<dbReference type="FunFam" id="3.40.50.200:FF:000041">
    <property type="entry name" value="Proline rich membrane-anchored mycosin"/>
    <property type="match status" value="1"/>
</dbReference>
<dbReference type="Gene3D" id="3.40.50.200">
    <property type="entry name" value="Peptidase S8/S53 domain"/>
    <property type="match status" value="2"/>
</dbReference>
<dbReference type="InterPro" id="IPR000209">
    <property type="entry name" value="Peptidase_S8/S53_dom"/>
</dbReference>
<dbReference type="InterPro" id="IPR036852">
    <property type="entry name" value="Peptidase_S8/S53_dom_sf"/>
</dbReference>
<dbReference type="InterPro" id="IPR023827">
    <property type="entry name" value="Peptidase_S8_Asp-AS"/>
</dbReference>
<dbReference type="InterPro" id="IPR015500">
    <property type="entry name" value="Peptidase_S8_subtilisin-rel"/>
</dbReference>
<dbReference type="InterPro" id="IPR023834">
    <property type="entry name" value="T7SS_pept_S8A_mycosin"/>
</dbReference>
<dbReference type="NCBIfam" id="TIGR03921">
    <property type="entry name" value="T7SS_mycosin"/>
    <property type="match status" value="1"/>
</dbReference>
<dbReference type="PANTHER" id="PTHR42884:SF14">
    <property type="entry name" value="NEUROENDOCRINE CONVERTASE 1"/>
    <property type="match status" value="1"/>
</dbReference>
<dbReference type="PANTHER" id="PTHR42884">
    <property type="entry name" value="PROPROTEIN CONVERTASE SUBTILISIN/KEXIN-RELATED"/>
    <property type="match status" value="1"/>
</dbReference>
<dbReference type="Pfam" id="PF00082">
    <property type="entry name" value="Peptidase_S8"/>
    <property type="match status" value="2"/>
</dbReference>
<dbReference type="PRINTS" id="PR00723">
    <property type="entry name" value="SUBTILISIN"/>
</dbReference>
<dbReference type="SUPFAM" id="SSF52743">
    <property type="entry name" value="Subtilisin-like"/>
    <property type="match status" value="1"/>
</dbReference>
<dbReference type="PROSITE" id="PS51892">
    <property type="entry name" value="SUBTILASE"/>
    <property type="match status" value="1"/>
</dbReference>
<dbReference type="PROSITE" id="PS00136">
    <property type="entry name" value="SUBTILASE_ASP"/>
    <property type="match status" value="1"/>
</dbReference>
<dbReference type="PROSITE" id="PS00137">
    <property type="entry name" value="SUBTILASE_HIS"/>
    <property type="match status" value="1"/>
</dbReference>
<name>MYCP5_MYCTU</name>
<gene>
    <name evidence="6" type="primary">mycP5</name>
    <name evidence="8" type="ordered locus">Rv1796</name>
</gene>
<comment type="subcellular location">
    <subcellularLocation>
        <location evidence="7">Cell membrane</location>
        <topology evidence="2">Single-pass membrane protein</topology>
    </subcellularLocation>
</comment>
<comment type="induction">
    <text evidence="5">Constitutively expressed during growth in culture.</text>
</comment>
<comment type="similarity">
    <text evidence="7">Belongs to the peptidase S8 family.</text>
</comment>